<sequence length="943" mass="105398">MTDYKATLNLPETAFPMKAGLPQREPETLKFWNDIGLYQKLRAIGGDRPKFVLHDGPPYANGSIHIGHAVNKILKDIIVRSKTLAGYDAPYVPGWDCHGLPIEHKVETTHGKNLPADKTRELCREYAAEQIEGQKADFIRLGVLGEWDNPYKTMNFANEANEIRALAEMVKQDFVFKGLKPVNWCFDCGSALAEAEVEYADKKSPTIDVGFPVADADKLAAAFGLAALDKPAQIVIWTTTPWTIPANQALNVHPEIDYALVDAGDRYLVLAEALVESCLARYQREGKVVATAKGEALELINFRHPFYERLSPVYLADYVALDAGTGIVHSSPAYGEDDFYTCKRYGMSNDDILSPVQSNGVYVDSLPFFGGQFIWKANPNVVAKLEEVGSLLAHETINHSYMHCWRHKTPLIYRATAQWFVGMDKQPRQGASLRERALEAITQTEFVPGWGQARLHGMIAGRPDWCISRQRNWGVPIPFFLHKASGELHPRTVELMEEVAQRVEKEGIEAWFKLDAAELLGEEAAQYDKINDTLDVWFDSGTTHWHVLRGSHRIGHASGPVADLYLEGSDQHRGWFHSSLLTGCAIDNHAPYRQLLTHGFTVDESGRKMSKSLGNTVVPQTVIDTLGADILRLWVASTDYSGEIAVSQQILQRSADAYRRIRNTTRFLLSNLNGFDAATDLLPPQEMLALDRWAVDRALLLQREIEEAYREYRFWNVYSKVHNFCVQELGGFYLDIIKDRQYTTGANSVARRSCQTALFHIAEALVRWIAPILAFTAEEVWKFLPGERAESVMLATWYDGLSELPADVTLNRQYWEQVMAVKAAVNKELENQRAAKAVGGNLQAEVTLYAEDALQAQLAKLGNELRFVLITSTATLAPLSAAPADAVDSEVAGLKLKVVKSTHAKCGRCWHHREDVGQHAAHPDLCGRCIENIEGSGEVRHYA</sequence>
<gene>
    <name evidence="1" type="primary">ileS</name>
    <name type="ordered locus">PA14_60370</name>
</gene>
<name>SYI_PSEAB</name>
<accession>Q02GB7</accession>
<reference key="1">
    <citation type="journal article" date="2006" name="Genome Biol.">
        <title>Genomic analysis reveals that Pseudomonas aeruginosa virulence is combinatorial.</title>
        <authorList>
            <person name="Lee D.G."/>
            <person name="Urbach J.M."/>
            <person name="Wu G."/>
            <person name="Liberati N.T."/>
            <person name="Feinbaum R.L."/>
            <person name="Miyata S."/>
            <person name="Diggins L.T."/>
            <person name="He J."/>
            <person name="Saucier M."/>
            <person name="Deziel E."/>
            <person name="Friedman L."/>
            <person name="Li L."/>
            <person name="Grills G."/>
            <person name="Montgomery K."/>
            <person name="Kucherlapati R."/>
            <person name="Rahme L.G."/>
            <person name="Ausubel F.M."/>
        </authorList>
    </citation>
    <scope>NUCLEOTIDE SEQUENCE [LARGE SCALE GENOMIC DNA]</scope>
    <source>
        <strain>UCBPP-PA14</strain>
    </source>
</reference>
<dbReference type="EC" id="6.1.1.5" evidence="1"/>
<dbReference type="EMBL" id="CP000438">
    <property type="protein sequence ID" value="ABJ13939.1"/>
    <property type="molecule type" value="Genomic_DNA"/>
</dbReference>
<dbReference type="RefSeq" id="WP_003141556.1">
    <property type="nucleotide sequence ID" value="NZ_CP034244.1"/>
</dbReference>
<dbReference type="SMR" id="Q02GB7"/>
<dbReference type="KEGG" id="pau:PA14_60370"/>
<dbReference type="PseudoCAP" id="PA14_60370"/>
<dbReference type="HOGENOM" id="CLU_001493_7_1_6"/>
<dbReference type="BioCyc" id="PAER208963:G1G74-5104-MONOMER"/>
<dbReference type="Proteomes" id="UP000000653">
    <property type="component" value="Chromosome"/>
</dbReference>
<dbReference type="GO" id="GO:0005829">
    <property type="term" value="C:cytosol"/>
    <property type="evidence" value="ECO:0007669"/>
    <property type="project" value="TreeGrafter"/>
</dbReference>
<dbReference type="GO" id="GO:0002161">
    <property type="term" value="F:aminoacyl-tRNA deacylase activity"/>
    <property type="evidence" value="ECO:0007669"/>
    <property type="project" value="InterPro"/>
</dbReference>
<dbReference type="GO" id="GO:0005524">
    <property type="term" value="F:ATP binding"/>
    <property type="evidence" value="ECO:0007669"/>
    <property type="project" value="UniProtKB-UniRule"/>
</dbReference>
<dbReference type="GO" id="GO:0004822">
    <property type="term" value="F:isoleucine-tRNA ligase activity"/>
    <property type="evidence" value="ECO:0007669"/>
    <property type="project" value="UniProtKB-UniRule"/>
</dbReference>
<dbReference type="GO" id="GO:0000049">
    <property type="term" value="F:tRNA binding"/>
    <property type="evidence" value="ECO:0007669"/>
    <property type="project" value="InterPro"/>
</dbReference>
<dbReference type="GO" id="GO:0008270">
    <property type="term" value="F:zinc ion binding"/>
    <property type="evidence" value="ECO:0007669"/>
    <property type="project" value="UniProtKB-UniRule"/>
</dbReference>
<dbReference type="GO" id="GO:0006428">
    <property type="term" value="P:isoleucyl-tRNA aminoacylation"/>
    <property type="evidence" value="ECO:0007669"/>
    <property type="project" value="UniProtKB-UniRule"/>
</dbReference>
<dbReference type="CDD" id="cd07960">
    <property type="entry name" value="Anticodon_Ia_Ile_BEm"/>
    <property type="match status" value="1"/>
</dbReference>
<dbReference type="CDD" id="cd00818">
    <property type="entry name" value="IleRS_core"/>
    <property type="match status" value="1"/>
</dbReference>
<dbReference type="FunFam" id="1.10.730.20:FF:000001">
    <property type="entry name" value="Isoleucine--tRNA ligase"/>
    <property type="match status" value="1"/>
</dbReference>
<dbReference type="FunFam" id="3.40.50.620:FF:000042">
    <property type="entry name" value="Isoleucine--tRNA ligase"/>
    <property type="match status" value="1"/>
</dbReference>
<dbReference type="FunFam" id="3.40.50.620:FF:000048">
    <property type="entry name" value="Isoleucine--tRNA ligase"/>
    <property type="match status" value="1"/>
</dbReference>
<dbReference type="Gene3D" id="1.10.730.20">
    <property type="match status" value="1"/>
</dbReference>
<dbReference type="Gene3D" id="3.40.50.620">
    <property type="entry name" value="HUPs"/>
    <property type="match status" value="2"/>
</dbReference>
<dbReference type="Gene3D" id="1.10.10.830">
    <property type="entry name" value="Ile-tRNA synthetase CP2 domain-like"/>
    <property type="match status" value="1"/>
</dbReference>
<dbReference type="HAMAP" id="MF_02002">
    <property type="entry name" value="Ile_tRNA_synth_type1"/>
    <property type="match status" value="1"/>
</dbReference>
<dbReference type="InterPro" id="IPR001412">
    <property type="entry name" value="aa-tRNA-synth_I_CS"/>
</dbReference>
<dbReference type="InterPro" id="IPR002300">
    <property type="entry name" value="aa-tRNA-synth_Ia"/>
</dbReference>
<dbReference type="InterPro" id="IPR033708">
    <property type="entry name" value="Anticodon_Ile_BEm"/>
</dbReference>
<dbReference type="InterPro" id="IPR002301">
    <property type="entry name" value="Ile-tRNA-ligase"/>
</dbReference>
<dbReference type="InterPro" id="IPR023585">
    <property type="entry name" value="Ile-tRNA-ligase_type1"/>
</dbReference>
<dbReference type="InterPro" id="IPR050081">
    <property type="entry name" value="Ile-tRNA_ligase"/>
</dbReference>
<dbReference type="InterPro" id="IPR013155">
    <property type="entry name" value="M/V/L/I-tRNA-synth_anticd-bd"/>
</dbReference>
<dbReference type="InterPro" id="IPR014729">
    <property type="entry name" value="Rossmann-like_a/b/a_fold"/>
</dbReference>
<dbReference type="InterPro" id="IPR009080">
    <property type="entry name" value="tRNAsynth_Ia_anticodon-bd"/>
</dbReference>
<dbReference type="InterPro" id="IPR009008">
    <property type="entry name" value="Val/Leu/Ile-tRNA-synth_edit"/>
</dbReference>
<dbReference type="InterPro" id="IPR010663">
    <property type="entry name" value="Znf_FPG/IleRS"/>
</dbReference>
<dbReference type="NCBIfam" id="TIGR00392">
    <property type="entry name" value="ileS"/>
    <property type="match status" value="1"/>
</dbReference>
<dbReference type="PANTHER" id="PTHR42765:SF1">
    <property type="entry name" value="ISOLEUCINE--TRNA LIGASE, MITOCHONDRIAL"/>
    <property type="match status" value="1"/>
</dbReference>
<dbReference type="PANTHER" id="PTHR42765">
    <property type="entry name" value="SOLEUCYL-TRNA SYNTHETASE"/>
    <property type="match status" value="1"/>
</dbReference>
<dbReference type="Pfam" id="PF08264">
    <property type="entry name" value="Anticodon_1"/>
    <property type="match status" value="1"/>
</dbReference>
<dbReference type="Pfam" id="PF00133">
    <property type="entry name" value="tRNA-synt_1"/>
    <property type="match status" value="1"/>
</dbReference>
<dbReference type="Pfam" id="PF06827">
    <property type="entry name" value="zf-FPG_IleRS"/>
    <property type="match status" value="1"/>
</dbReference>
<dbReference type="PRINTS" id="PR00984">
    <property type="entry name" value="TRNASYNTHILE"/>
</dbReference>
<dbReference type="SUPFAM" id="SSF47323">
    <property type="entry name" value="Anticodon-binding domain of a subclass of class I aminoacyl-tRNA synthetases"/>
    <property type="match status" value="1"/>
</dbReference>
<dbReference type="SUPFAM" id="SSF52374">
    <property type="entry name" value="Nucleotidylyl transferase"/>
    <property type="match status" value="1"/>
</dbReference>
<dbReference type="SUPFAM" id="SSF50677">
    <property type="entry name" value="ValRS/IleRS/LeuRS editing domain"/>
    <property type="match status" value="1"/>
</dbReference>
<dbReference type="PROSITE" id="PS00178">
    <property type="entry name" value="AA_TRNA_LIGASE_I"/>
    <property type="match status" value="1"/>
</dbReference>
<protein>
    <recommendedName>
        <fullName evidence="1">Isoleucine--tRNA ligase</fullName>
        <ecNumber evidence="1">6.1.1.5</ecNumber>
    </recommendedName>
    <alternativeName>
        <fullName evidence="1">Isoleucyl-tRNA synthetase</fullName>
        <shortName evidence="1">IleRS</shortName>
    </alternativeName>
</protein>
<comment type="function">
    <text evidence="1">Catalyzes the attachment of isoleucine to tRNA(Ile). As IleRS can inadvertently accommodate and process structurally similar amino acids such as valine, to avoid such errors it has two additional distinct tRNA(Ile)-dependent editing activities. One activity is designated as 'pretransfer' editing and involves the hydrolysis of activated Val-AMP. The other activity is designated 'posttransfer' editing and involves deacylation of mischarged Val-tRNA(Ile).</text>
</comment>
<comment type="catalytic activity">
    <reaction evidence="1">
        <text>tRNA(Ile) + L-isoleucine + ATP = L-isoleucyl-tRNA(Ile) + AMP + diphosphate</text>
        <dbReference type="Rhea" id="RHEA:11060"/>
        <dbReference type="Rhea" id="RHEA-COMP:9666"/>
        <dbReference type="Rhea" id="RHEA-COMP:9695"/>
        <dbReference type="ChEBI" id="CHEBI:30616"/>
        <dbReference type="ChEBI" id="CHEBI:33019"/>
        <dbReference type="ChEBI" id="CHEBI:58045"/>
        <dbReference type="ChEBI" id="CHEBI:78442"/>
        <dbReference type="ChEBI" id="CHEBI:78528"/>
        <dbReference type="ChEBI" id="CHEBI:456215"/>
        <dbReference type="EC" id="6.1.1.5"/>
    </reaction>
</comment>
<comment type="cofactor">
    <cofactor evidence="1">
        <name>Zn(2+)</name>
        <dbReference type="ChEBI" id="CHEBI:29105"/>
    </cofactor>
    <text evidence="1">Binds 1 zinc ion per subunit.</text>
</comment>
<comment type="subunit">
    <text evidence="1">Monomer.</text>
</comment>
<comment type="subcellular location">
    <subcellularLocation>
        <location evidence="1">Cytoplasm</location>
    </subcellularLocation>
</comment>
<comment type="domain">
    <text evidence="1">IleRS has two distinct active sites: one for aminoacylation and one for editing. The misactivated valine is translocated from the active site to the editing site, which sterically excludes the correctly activated isoleucine. The single editing site contains two valyl binding pockets, one specific for each substrate (Val-AMP or Val-tRNA(Ile)).</text>
</comment>
<comment type="similarity">
    <text evidence="1">Belongs to the class-I aminoacyl-tRNA synthetase family. IleS type 1 subfamily.</text>
</comment>
<proteinExistence type="inferred from homology"/>
<feature type="chain" id="PRO_1000022104" description="Isoleucine--tRNA ligase">
    <location>
        <begin position="1"/>
        <end position="943"/>
    </location>
</feature>
<feature type="short sequence motif" description="'HIGH' region">
    <location>
        <begin position="58"/>
        <end position="68"/>
    </location>
</feature>
<feature type="short sequence motif" description="'KMSKS' region">
    <location>
        <begin position="608"/>
        <end position="612"/>
    </location>
</feature>
<feature type="binding site" evidence="1">
    <location>
        <position position="567"/>
    </location>
    <ligand>
        <name>L-isoleucyl-5'-AMP</name>
        <dbReference type="ChEBI" id="CHEBI:178002"/>
    </ligand>
</feature>
<feature type="binding site" evidence="1">
    <location>
        <position position="611"/>
    </location>
    <ligand>
        <name>ATP</name>
        <dbReference type="ChEBI" id="CHEBI:30616"/>
    </ligand>
</feature>
<feature type="binding site" evidence="1">
    <location>
        <position position="906"/>
    </location>
    <ligand>
        <name>Zn(2+)</name>
        <dbReference type="ChEBI" id="CHEBI:29105"/>
    </ligand>
</feature>
<feature type="binding site" evidence="1">
    <location>
        <position position="909"/>
    </location>
    <ligand>
        <name>Zn(2+)</name>
        <dbReference type="ChEBI" id="CHEBI:29105"/>
    </ligand>
</feature>
<feature type="binding site" evidence="1">
    <location>
        <position position="926"/>
    </location>
    <ligand>
        <name>Zn(2+)</name>
        <dbReference type="ChEBI" id="CHEBI:29105"/>
    </ligand>
</feature>
<feature type="binding site" evidence="1">
    <location>
        <position position="929"/>
    </location>
    <ligand>
        <name>Zn(2+)</name>
        <dbReference type="ChEBI" id="CHEBI:29105"/>
    </ligand>
</feature>
<evidence type="ECO:0000255" key="1">
    <source>
        <dbReference type="HAMAP-Rule" id="MF_02002"/>
    </source>
</evidence>
<keyword id="KW-0030">Aminoacyl-tRNA synthetase</keyword>
<keyword id="KW-0067">ATP-binding</keyword>
<keyword id="KW-0963">Cytoplasm</keyword>
<keyword id="KW-0436">Ligase</keyword>
<keyword id="KW-0479">Metal-binding</keyword>
<keyword id="KW-0547">Nucleotide-binding</keyword>
<keyword id="KW-0648">Protein biosynthesis</keyword>
<keyword id="KW-0862">Zinc</keyword>
<organism>
    <name type="scientific">Pseudomonas aeruginosa (strain UCBPP-PA14)</name>
    <dbReference type="NCBI Taxonomy" id="208963"/>
    <lineage>
        <taxon>Bacteria</taxon>
        <taxon>Pseudomonadati</taxon>
        <taxon>Pseudomonadota</taxon>
        <taxon>Gammaproteobacteria</taxon>
        <taxon>Pseudomonadales</taxon>
        <taxon>Pseudomonadaceae</taxon>
        <taxon>Pseudomonas</taxon>
    </lineage>
</organism>